<keyword id="KW-0020">Allergen</keyword>
<keyword id="KW-1015">Disulfide bond</keyword>
<keyword id="KW-1185">Reference proteome</keyword>
<keyword id="KW-0964">Secreted</keyword>
<keyword id="KW-0708">Seed storage protein</keyword>
<keyword id="KW-0732">Signal</keyword>
<keyword id="KW-0758">Storage protein</keyword>
<accession>Q01883</accession>
<accession>Q01884</accession>
<accession>Q0D7S5</accession>
<accession>Q8H4M2</accession>
<comment type="function">
    <text evidence="3">Seed storage protein.</text>
</comment>
<comment type="subcellular location">
    <subcellularLocation>
        <location evidence="3">Secreted</location>
    </subcellularLocation>
</comment>
<comment type="PTM">
    <text evidence="2">Five disulfide bonds are present.</text>
</comment>
<comment type="allergen">
    <text evidence="4">Causes an allergic reaction in human. Binds to IgE.</text>
</comment>
<comment type="similarity">
    <text evidence="3">Belongs to the cereal trypsin/alpha-amylase inhibitor family.</text>
</comment>
<proteinExistence type="evidence at protein level"/>
<protein>
    <recommendedName>
        <fullName>Seed allergenic protein RAG1</fullName>
    </recommendedName>
    <alternativeName>
        <fullName>Seed allergenic protein RA17</fullName>
    </alternativeName>
    <allergenName>Ory s aA_TI</allergenName>
</protein>
<dbReference type="EMBL" id="X66257">
    <property type="protein sequence ID" value="CAA46983.1"/>
    <property type="molecule type" value="mRNA"/>
</dbReference>
<dbReference type="EMBL" id="D11431">
    <property type="protein sequence ID" value="BAA01997.1"/>
    <property type="molecule type" value="mRNA"/>
</dbReference>
<dbReference type="EMBL" id="D11433">
    <property type="protein sequence ID" value="BAA01999.1"/>
    <property type="molecule type" value="Genomic_DNA"/>
</dbReference>
<dbReference type="EMBL" id="AP004002">
    <property type="protein sequence ID" value="BAC20652.1"/>
    <property type="molecule type" value="Genomic_DNA"/>
</dbReference>
<dbReference type="EMBL" id="AP008213">
    <property type="protein sequence ID" value="BAF21098.1"/>
    <property type="molecule type" value="Genomic_DNA"/>
</dbReference>
<dbReference type="EMBL" id="AP014963">
    <property type="protein sequence ID" value="BAT00617.1"/>
    <property type="molecule type" value="Genomic_DNA"/>
</dbReference>
<dbReference type="EMBL" id="AK242324">
    <property type="protein sequence ID" value="BAH01261.1"/>
    <property type="molecule type" value="mRNA"/>
</dbReference>
<dbReference type="PIR" id="S21157">
    <property type="entry name" value="S21157"/>
</dbReference>
<dbReference type="PIR" id="S31081">
    <property type="entry name" value="S31081"/>
</dbReference>
<dbReference type="RefSeq" id="XP_015646665.1">
    <property type="nucleotide sequence ID" value="XM_015791179.1"/>
</dbReference>
<dbReference type="SMR" id="Q01883"/>
<dbReference type="FunCoup" id="Q01883">
    <property type="interactions" value="169"/>
</dbReference>
<dbReference type="Allergome" id="1049">
    <property type="allergen name" value="Ory s aA_TI"/>
</dbReference>
<dbReference type="PaxDb" id="39947-Q01883"/>
<dbReference type="EnsemblPlants" id="Os07t0214100-01">
    <property type="protein sequence ID" value="Os07t0214100-01"/>
    <property type="gene ID" value="Os07g0214100"/>
</dbReference>
<dbReference type="Gramene" id="Os07t0214100-01">
    <property type="protein sequence ID" value="Os07t0214100-01"/>
    <property type="gene ID" value="Os07g0214100"/>
</dbReference>
<dbReference type="KEGG" id="dosa:Os07g0214100"/>
<dbReference type="eggNOG" id="ENOG502R43K">
    <property type="taxonomic scope" value="Eukaryota"/>
</dbReference>
<dbReference type="HOGENOM" id="CLU_140628_0_0_1"/>
<dbReference type="InParanoid" id="Q01883"/>
<dbReference type="OrthoDB" id="652066at2759"/>
<dbReference type="Proteomes" id="UP000000763">
    <property type="component" value="Chromosome 7"/>
</dbReference>
<dbReference type="Proteomes" id="UP000059680">
    <property type="component" value="Chromosome 7"/>
</dbReference>
<dbReference type="GO" id="GO:0005576">
    <property type="term" value="C:extracellular region"/>
    <property type="evidence" value="ECO:0007669"/>
    <property type="project" value="UniProtKB-SubCell"/>
</dbReference>
<dbReference type="GO" id="GO:0019863">
    <property type="term" value="F:IgE binding"/>
    <property type="evidence" value="ECO:0000314"/>
    <property type="project" value="UniProtKB"/>
</dbReference>
<dbReference type="GO" id="GO:0045735">
    <property type="term" value="F:nutrient reservoir activity"/>
    <property type="evidence" value="ECO:0007669"/>
    <property type="project" value="UniProtKB-KW"/>
</dbReference>
<dbReference type="GO" id="GO:0004867">
    <property type="term" value="F:serine-type endopeptidase inhibitor activity"/>
    <property type="evidence" value="ECO:0000250"/>
    <property type="project" value="Gramene"/>
</dbReference>
<dbReference type="CDD" id="cd00261">
    <property type="entry name" value="AAI_SS"/>
    <property type="match status" value="1"/>
</dbReference>
<dbReference type="FunFam" id="1.10.110.10:FF:000004">
    <property type="entry name" value="Alpha-amylase inhibitor 0.19"/>
    <property type="match status" value="1"/>
</dbReference>
<dbReference type="Gene3D" id="1.10.110.10">
    <property type="entry name" value="Plant lipid-transfer and hydrophobic proteins"/>
    <property type="match status" value="1"/>
</dbReference>
<dbReference type="InterPro" id="IPR002411">
    <property type="entry name" value="Allergen/amylase_inhib_rice"/>
</dbReference>
<dbReference type="InterPro" id="IPR006106">
    <property type="entry name" value="Allergen/soft/tryp_amyl_inhib"/>
</dbReference>
<dbReference type="InterPro" id="IPR006105">
    <property type="entry name" value="Allergen/tryp_amyl_inhib_CS"/>
</dbReference>
<dbReference type="InterPro" id="IPR036312">
    <property type="entry name" value="Bifun_inhib/LTP/seed_sf"/>
</dbReference>
<dbReference type="InterPro" id="IPR016140">
    <property type="entry name" value="Bifunc_inhib/LTP/seed_store"/>
</dbReference>
<dbReference type="PANTHER" id="PTHR34481:SF8">
    <property type="entry name" value="SEED ALLERGENIC PROTEIN RAG1"/>
    <property type="match status" value="1"/>
</dbReference>
<dbReference type="PANTHER" id="PTHR34481">
    <property type="entry name" value="TRYPSIN/FACTOR XIIA INHIBITOR-RELATED"/>
    <property type="match status" value="1"/>
</dbReference>
<dbReference type="Pfam" id="PF00234">
    <property type="entry name" value="Tryp_alpha_amyl"/>
    <property type="match status" value="1"/>
</dbReference>
<dbReference type="PIRSF" id="PIRSF001657">
    <property type="entry name" value="Allergen/amylase_inhib"/>
    <property type="match status" value="1"/>
</dbReference>
<dbReference type="PRINTS" id="PR00808">
    <property type="entry name" value="AMLASEINHBTR"/>
</dbReference>
<dbReference type="PRINTS" id="PR00809">
    <property type="entry name" value="RAGALLERGEN"/>
</dbReference>
<dbReference type="SMART" id="SM00499">
    <property type="entry name" value="AAI"/>
    <property type="match status" value="1"/>
</dbReference>
<dbReference type="SUPFAM" id="SSF47699">
    <property type="entry name" value="Bifunctional inhibitor/lipid-transfer protein/seed storage 2S albumin"/>
    <property type="match status" value="1"/>
</dbReference>
<dbReference type="PROSITE" id="PS00426">
    <property type="entry name" value="CEREAL_TRYP_AMYL_INH"/>
    <property type="match status" value="1"/>
</dbReference>
<reference key="1">
    <citation type="journal article" date="1992" name="FEBS Lett.">
        <title>Nucleotide sequence of a cDNA clone encoding a major allergenic protein in rice seeds. Homology of the deduced amino acid sequence with members of alpha-amylase/trypsin inhibitor family.</title>
        <authorList>
            <person name="Izumi H."/>
            <person name="Adachi T."/>
            <person name="Fujii N."/>
            <person name="Matsuda T."/>
            <person name="Nakamura R."/>
            <person name="Tanaka K."/>
            <person name="Urisu A."/>
            <person name="Kurosawa Y."/>
        </authorList>
    </citation>
    <scope>NUCLEOTIDE SEQUENCE [MRNA]</scope>
    <source>
        <tissue>Seed</tissue>
    </source>
</reference>
<reference key="2">
    <citation type="journal article" date="1993" name="Plant Mol. Biol.">
        <title>Gene structure and expression of rice seed allergenic proteins belonging to the alpha-amylase/trypsin inhibitor family.</title>
        <authorList>
            <person name="Adachi T."/>
            <person name="Izumi H."/>
            <person name="Yamada T."/>
            <person name="Tanaka K."/>
            <person name="Takeuchi S."/>
            <person name="Nakamura R."/>
            <person name="Matsuda T."/>
        </authorList>
    </citation>
    <scope>NUCLEOTIDE SEQUENCE [GENOMIC DNA / MRNA]</scope>
    <source>
        <strain>cv. Nipponbare</strain>
        <tissue>Seed</tissue>
    </source>
</reference>
<reference key="3">
    <citation type="journal article" date="2005" name="Nature">
        <title>The map-based sequence of the rice genome.</title>
        <authorList>
            <consortium name="International rice genome sequencing project (IRGSP)"/>
        </authorList>
    </citation>
    <scope>NUCLEOTIDE SEQUENCE [LARGE SCALE GENOMIC DNA]</scope>
    <source>
        <strain>cv. Nipponbare</strain>
    </source>
</reference>
<reference key="4">
    <citation type="journal article" date="2008" name="Nucleic Acids Res.">
        <title>The rice annotation project database (RAP-DB): 2008 update.</title>
        <authorList>
            <consortium name="The rice annotation project (RAP)"/>
        </authorList>
    </citation>
    <scope>GENOME REANNOTATION</scope>
    <source>
        <strain>cv. Nipponbare</strain>
    </source>
</reference>
<reference key="5">
    <citation type="journal article" date="2013" name="Rice">
        <title>Improvement of the Oryza sativa Nipponbare reference genome using next generation sequence and optical map data.</title>
        <authorList>
            <person name="Kawahara Y."/>
            <person name="de la Bastide M."/>
            <person name="Hamilton J.P."/>
            <person name="Kanamori H."/>
            <person name="McCombie W.R."/>
            <person name="Ouyang S."/>
            <person name="Schwartz D.C."/>
            <person name="Tanaka T."/>
            <person name="Wu J."/>
            <person name="Zhou S."/>
            <person name="Childs K.L."/>
            <person name="Davidson R.M."/>
            <person name="Lin H."/>
            <person name="Quesada-Ocampo L."/>
            <person name="Vaillancourt B."/>
            <person name="Sakai H."/>
            <person name="Lee S.S."/>
            <person name="Kim J."/>
            <person name="Numa H."/>
            <person name="Itoh T."/>
            <person name="Buell C.R."/>
            <person name="Matsumoto T."/>
        </authorList>
    </citation>
    <scope>GENOME REANNOTATION</scope>
    <source>
        <strain>cv. Nipponbare</strain>
    </source>
</reference>
<reference key="6">
    <citation type="submission" date="2006-10" db="EMBL/GenBank/DDBJ databases">
        <title>Oryza sativa full length cDNA.</title>
        <authorList>
            <consortium name="The rice full-length cDNA consortium"/>
        </authorList>
    </citation>
    <scope>NUCLEOTIDE SEQUENCE [LARGE SCALE MRNA]</scope>
    <source>
        <strain>cv. Nipponbare</strain>
    </source>
</reference>
<reference key="7">
    <citation type="journal article" date="1999" name="Biosci. Biotechnol. Biochem.">
        <title>Structural characterization of the 16-kDa allergen, RA17, in rice seeds. Prediction of the secondary structure and identification of intramolecular disulfide bridges.</title>
        <authorList>
            <person name="Izumi H."/>
            <person name="Sugiyama M."/>
            <person name="Matsuda T."/>
            <person name="Nakamura R."/>
        </authorList>
    </citation>
    <scope>DISULFIDE BONDS</scope>
    <scope>ALLERGEN</scope>
</reference>
<name>RAG1_ORYSJ</name>
<organism>
    <name type="scientific">Oryza sativa subsp. japonica</name>
    <name type="common">Rice</name>
    <dbReference type="NCBI Taxonomy" id="39947"/>
    <lineage>
        <taxon>Eukaryota</taxon>
        <taxon>Viridiplantae</taxon>
        <taxon>Streptophyta</taxon>
        <taxon>Embryophyta</taxon>
        <taxon>Tracheophyta</taxon>
        <taxon>Spermatophyta</taxon>
        <taxon>Magnoliopsida</taxon>
        <taxon>Liliopsida</taxon>
        <taxon>Poales</taxon>
        <taxon>Poaceae</taxon>
        <taxon>BOP clade</taxon>
        <taxon>Oryzoideae</taxon>
        <taxon>Oryzeae</taxon>
        <taxon>Oryzinae</taxon>
        <taxon>Oryza</taxon>
        <taxon>Oryza sativa</taxon>
    </lineage>
</organism>
<evidence type="ECO:0000255" key="1"/>
<evidence type="ECO:0000269" key="2">
    <source>
    </source>
</evidence>
<evidence type="ECO:0000305" key="3"/>
<evidence type="ECO:0000305" key="4">
    <source>
    </source>
</evidence>
<feature type="signal peptide" evidence="1">
    <location>
        <begin position="1"/>
        <end position="27"/>
    </location>
</feature>
<feature type="chain" id="PRO_0000014361" description="Seed allergenic protein RAG1">
    <location>
        <begin position="28"/>
        <end position="163"/>
    </location>
</feature>
<feature type="disulfide bond" description="Or C-39 with C-92" evidence="2">
    <location>
        <begin position="39"/>
        <end position="90"/>
    </location>
</feature>
<feature type="disulfide bond" description="Or C-53 with C-79" evidence="2">
    <location>
        <begin position="53"/>
        <end position="78"/>
    </location>
</feature>
<feature type="disulfide bond" evidence="2">
    <location>
        <begin position="61"/>
        <end position="122"/>
    </location>
</feature>
<feature type="disulfide bond" description="Or C-78 with C-138" evidence="2">
    <location>
        <begin position="79"/>
        <end position="138"/>
    </location>
</feature>
<feature type="disulfide bond" description="Or C-90 with C-150" evidence="2">
    <location>
        <begin position="92"/>
        <end position="150"/>
    </location>
</feature>
<feature type="sequence conflict" description="In Ref. 1; CAA46983 and 2; BAA01997/BAA01999." evidence="3" ref="1 2">
    <location>
        <position position="67"/>
    </location>
</feature>
<gene>
    <name type="primary">RAG1</name>
    <name type="synonym">RA17</name>
    <name type="ordered locus">Os07g0214100</name>
    <name type="ordered locus">LOC_Os07g11360</name>
    <name type="ORF">OJ1116_C08.112</name>
</gene>
<sequence>MASNKVVFSVLLLVVLSVLAAAMATMADHHQVYSPGEQCRPGISYPTYSLPQCRTLVRRQCVGRGAASAADEQVWQDCCRQLAAVDDGWCRCGALDHMLSGIYRELGATEAGHPMAEVFPGCRRGDLERAAASLPAFCNVDIPNGPGGVCYWLGYPRTPRTGH</sequence>